<evidence type="ECO:0000255" key="1">
    <source>
        <dbReference type="HAMAP-Rule" id="MF_01710"/>
    </source>
</evidence>
<name>ECFA1_OCEIH</name>
<feature type="chain" id="PRO_0000092049" description="Energy-coupling factor transporter ATP-binding protein EcfA1">
    <location>
        <begin position="1"/>
        <end position="279"/>
    </location>
</feature>
<feature type="domain" description="ABC transporter" evidence="1">
    <location>
        <begin position="6"/>
        <end position="240"/>
    </location>
</feature>
<feature type="binding site" evidence="1">
    <location>
        <begin position="40"/>
        <end position="47"/>
    </location>
    <ligand>
        <name>ATP</name>
        <dbReference type="ChEBI" id="CHEBI:30616"/>
    </ligand>
</feature>
<gene>
    <name evidence="1" type="primary">ecfA1</name>
    <name type="synonym">cbiO1</name>
    <name type="ordered locus">OB0147</name>
</gene>
<reference key="1">
    <citation type="journal article" date="2002" name="Nucleic Acids Res.">
        <title>Genome sequence of Oceanobacillus iheyensis isolated from the Iheya Ridge and its unexpected adaptive capabilities to extreme environments.</title>
        <authorList>
            <person name="Takami H."/>
            <person name="Takaki Y."/>
            <person name="Uchiyama I."/>
        </authorList>
    </citation>
    <scope>NUCLEOTIDE SEQUENCE [LARGE SCALE GENOMIC DNA]</scope>
    <source>
        <strain>DSM 14371 / CIP 107618 / JCM 11309 / KCTC 3954 / HTE831</strain>
    </source>
</reference>
<dbReference type="EC" id="7.-.-.-" evidence="1"/>
<dbReference type="EMBL" id="BA000028">
    <property type="protein sequence ID" value="BAC12103.1"/>
    <property type="molecule type" value="Genomic_DNA"/>
</dbReference>
<dbReference type="RefSeq" id="WP_011064548.1">
    <property type="nucleotide sequence ID" value="NC_004193.1"/>
</dbReference>
<dbReference type="SMR" id="Q8ETV7"/>
<dbReference type="STRING" id="221109.gene:10732337"/>
<dbReference type="KEGG" id="oih:OB0147"/>
<dbReference type="eggNOG" id="COG1122">
    <property type="taxonomic scope" value="Bacteria"/>
</dbReference>
<dbReference type="HOGENOM" id="CLU_000604_1_22_9"/>
<dbReference type="OrthoDB" id="9784332at2"/>
<dbReference type="PhylomeDB" id="Q8ETV7"/>
<dbReference type="Proteomes" id="UP000000822">
    <property type="component" value="Chromosome"/>
</dbReference>
<dbReference type="GO" id="GO:0043190">
    <property type="term" value="C:ATP-binding cassette (ABC) transporter complex"/>
    <property type="evidence" value="ECO:0007669"/>
    <property type="project" value="TreeGrafter"/>
</dbReference>
<dbReference type="GO" id="GO:0005524">
    <property type="term" value="F:ATP binding"/>
    <property type="evidence" value="ECO:0007669"/>
    <property type="project" value="UniProtKB-KW"/>
</dbReference>
<dbReference type="GO" id="GO:0016887">
    <property type="term" value="F:ATP hydrolysis activity"/>
    <property type="evidence" value="ECO:0007669"/>
    <property type="project" value="InterPro"/>
</dbReference>
<dbReference type="GO" id="GO:0042626">
    <property type="term" value="F:ATPase-coupled transmembrane transporter activity"/>
    <property type="evidence" value="ECO:0007669"/>
    <property type="project" value="TreeGrafter"/>
</dbReference>
<dbReference type="CDD" id="cd03225">
    <property type="entry name" value="ABC_cobalt_CbiO_domain1"/>
    <property type="match status" value="1"/>
</dbReference>
<dbReference type="FunFam" id="3.40.50.300:FF:000224">
    <property type="entry name" value="Energy-coupling factor transporter ATP-binding protein EcfA"/>
    <property type="match status" value="1"/>
</dbReference>
<dbReference type="Gene3D" id="3.40.50.300">
    <property type="entry name" value="P-loop containing nucleotide triphosphate hydrolases"/>
    <property type="match status" value="1"/>
</dbReference>
<dbReference type="InterPro" id="IPR003593">
    <property type="entry name" value="AAA+_ATPase"/>
</dbReference>
<dbReference type="InterPro" id="IPR003439">
    <property type="entry name" value="ABC_transporter-like_ATP-bd"/>
</dbReference>
<dbReference type="InterPro" id="IPR017871">
    <property type="entry name" value="ABC_transporter-like_CS"/>
</dbReference>
<dbReference type="InterPro" id="IPR015856">
    <property type="entry name" value="ABC_transpr_CbiO/EcfA_su"/>
</dbReference>
<dbReference type="InterPro" id="IPR050095">
    <property type="entry name" value="ECF_ABC_transporter_ATP-bd"/>
</dbReference>
<dbReference type="InterPro" id="IPR030947">
    <property type="entry name" value="EcfA_1"/>
</dbReference>
<dbReference type="InterPro" id="IPR027417">
    <property type="entry name" value="P-loop_NTPase"/>
</dbReference>
<dbReference type="NCBIfam" id="TIGR04520">
    <property type="entry name" value="ECF_ATPase_1"/>
    <property type="match status" value="1"/>
</dbReference>
<dbReference type="NCBIfam" id="NF010156">
    <property type="entry name" value="PRK13635.1"/>
    <property type="match status" value="1"/>
</dbReference>
<dbReference type="NCBIfam" id="NF010167">
    <property type="entry name" value="PRK13648.1"/>
    <property type="match status" value="1"/>
</dbReference>
<dbReference type="PANTHER" id="PTHR43553:SF24">
    <property type="entry name" value="ENERGY-COUPLING FACTOR TRANSPORTER ATP-BINDING PROTEIN ECFA1"/>
    <property type="match status" value="1"/>
</dbReference>
<dbReference type="PANTHER" id="PTHR43553">
    <property type="entry name" value="HEAVY METAL TRANSPORTER"/>
    <property type="match status" value="1"/>
</dbReference>
<dbReference type="Pfam" id="PF00005">
    <property type="entry name" value="ABC_tran"/>
    <property type="match status" value="1"/>
</dbReference>
<dbReference type="SMART" id="SM00382">
    <property type="entry name" value="AAA"/>
    <property type="match status" value="1"/>
</dbReference>
<dbReference type="SUPFAM" id="SSF52540">
    <property type="entry name" value="P-loop containing nucleoside triphosphate hydrolases"/>
    <property type="match status" value="1"/>
</dbReference>
<dbReference type="PROSITE" id="PS00211">
    <property type="entry name" value="ABC_TRANSPORTER_1"/>
    <property type="match status" value="1"/>
</dbReference>
<dbReference type="PROSITE" id="PS50893">
    <property type="entry name" value="ABC_TRANSPORTER_2"/>
    <property type="match status" value="1"/>
</dbReference>
<dbReference type="PROSITE" id="PS51246">
    <property type="entry name" value="CBIO"/>
    <property type="match status" value="1"/>
</dbReference>
<protein>
    <recommendedName>
        <fullName evidence="1">Energy-coupling factor transporter ATP-binding protein EcfA1</fullName>
        <shortName evidence="1">ECF transporter A component EcfA1</shortName>
        <ecNumber evidence="1">7.-.-.-</ecNumber>
    </recommendedName>
</protein>
<proteinExistence type="inferred from homology"/>
<keyword id="KW-0067">ATP-binding</keyword>
<keyword id="KW-1003">Cell membrane</keyword>
<keyword id="KW-0472">Membrane</keyword>
<keyword id="KW-0547">Nucleotide-binding</keyword>
<keyword id="KW-1185">Reference proteome</keyword>
<keyword id="KW-1278">Translocase</keyword>
<keyword id="KW-0813">Transport</keyword>
<comment type="function">
    <text evidence="1">ATP-binding (A) component of a common energy-coupling factor (ECF) ABC-transporter complex. Unlike classic ABC transporters this ECF transporter provides the energy necessary to transport a number of different substrates.</text>
</comment>
<comment type="subunit">
    <text evidence="1">Forms a stable energy-coupling factor (ECF) transporter complex composed of 2 membrane-embedded substrate-binding proteins (S component), 2 ATP-binding proteins (A component) and 2 transmembrane proteins (T component).</text>
</comment>
<comment type="subcellular location">
    <subcellularLocation>
        <location evidence="1">Cell membrane</location>
        <topology evidence="1">Peripheral membrane protein</topology>
    </subcellularLocation>
</comment>
<comment type="similarity">
    <text evidence="1">Belongs to the ABC transporter superfamily. Energy-coupling factor EcfA family.</text>
</comment>
<organism>
    <name type="scientific">Oceanobacillus iheyensis (strain DSM 14371 / CIP 107618 / JCM 11309 / KCTC 3954 / HTE831)</name>
    <dbReference type="NCBI Taxonomy" id="221109"/>
    <lineage>
        <taxon>Bacteria</taxon>
        <taxon>Bacillati</taxon>
        <taxon>Bacillota</taxon>
        <taxon>Bacilli</taxon>
        <taxon>Bacillales</taxon>
        <taxon>Bacillaceae</taxon>
        <taxon>Oceanobacillus</taxon>
    </lineage>
</organism>
<sequence length="279" mass="31788">MSRKIVEFRNVSFRYDEEGPWVLKNCSFEIYEDEWLAIIGHNGSGKSTIAKLLNGLLFPQEGEIYIDGIKVDENSIWDIRKEVGMVFQNPDNQFVGATVQDDVAFGMENRGIPREIMKKRIDETLQAVRMQDYLLTEPHRLSGGQKQRVAIASVLAISPKILILDEATAMLDPVGRKEIMQTVNSIQDSQGLSLITITHDLKEITRADRVIVLNNGERWDEATPSQLFKRKDALREIGLDVPFVAHLSDAFRNNGITIEHSPLSHEQLLEELWTYHSKM</sequence>
<accession>Q8ETV7</accession>